<comment type="subcellular location">
    <subcellularLocation>
        <location evidence="1">Cell inner membrane</location>
        <topology evidence="1">Multi-pass membrane protein</topology>
    </subcellularLocation>
</comment>
<comment type="similarity">
    <text evidence="3">Belongs to the EamA transporter family.</text>
</comment>
<accession>P0AA74</accession>
<accession>P28636</accession>
<feature type="chain" id="PRO_0000108170" description="Uncharacterized inner membrane transporter YhbE">
    <location>
        <begin position="1"/>
        <end position="321"/>
    </location>
</feature>
<feature type="topological domain" description="Cytoplasmic" evidence="2">
    <location>
        <begin position="1"/>
        <end position="5"/>
    </location>
</feature>
<feature type="transmembrane region" description="Helical" evidence="2">
    <location>
        <begin position="6"/>
        <end position="26"/>
    </location>
</feature>
<feature type="topological domain" description="Periplasmic" evidence="2">
    <location>
        <begin position="27"/>
        <end position="35"/>
    </location>
</feature>
<feature type="transmembrane region" description="Helical" evidence="2">
    <location>
        <begin position="36"/>
        <end position="56"/>
    </location>
</feature>
<feature type="topological domain" description="Cytoplasmic" evidence="2">
    <location>
        <begin position="57"/>
        <end position="70"/>
    </location>
</feature>
<feature type="transmembrane region" description="Helical" evidence="2">
    <location>
        <begin position="71"/>
        <end position="91"/>
    </location>
</feature>
<feature type="topological domain" description="Periplasmic" evidence="2">
    <location>
        <begin position="92"/>
        <end position="99"/>
    </location>
</feature>
<feature type="transmembrane region" description="Helical" evidence="2">
    <location>
        <begin position="100"/>
        <end position="120"/>
    </location>
</feature>
<feature type="topological domain" description="Cytoplasmic" evidence="2">
    <location>
        <begin position="121"/>
        <end position="130"/>
    </location>
</feature>
<feature type="transmembrane region" description="Helical" evidence="2">
    <location>
        <begin position="131"/>
        <end position="151"/>
    </location>
</feature>
<feature type="topological domain" description="Periplasmic" evidence="2">
    <location>
        <begin position="152"/>
        <end position="156"/>
    </location>
</feature>
<feature type="transmembrane region" description="Helical" evidence="2">
    <location>
        <begin position="157"/>
        <end position="177"/>
    </location>
</feature>
<feature type="topological domain" description="Cytoplasmic" evidence="2">
    <location>
        <begin position="178"/>
        <end position="190"/>
    </location>
</feature>
<feature type="transmembrane region" description="Helical" evidence="2">
    <location>
        <begin position="191"/>
        <end position="211"/>
    </location>
</feature>
<feature type="topological domain" description="Periplasmic" evidence="2">
    <location>
        <begin position="212"/>
        <end position="216"/>
    </location>
</feature>
<feature type="transmembrane region" description="Helical" evidence="2">
    <location>
        <begin position="217"/>
        <end position="237"/>
    </location>
</feature>
<feature type="topological domain" description="Cytoplasmic" evidence="2">
    <location>
        <begin position="238"/>
        <end position="249"/>
    </location>
</feature>
<feature type="transmembrane region" description="Helical" evidence="2">
    <location>
        <begin position="250"/>
        <end position="270"/>
    </location>
</feature>
<feature type="topological domain" description="Periplasmic" evidence="2">
    <location>
        <begin position="271"/>
        <end position="278"/>
    </location>
</feature>
<feature type="transmembrane region" description="Helical" evidence="2">
    <location>
        <begin position="279"/>
        <end position="299"/>
    </location>
</feature>
<feature type="topological domain" description="Cytoplasmic" evidence="2">
    <location>
        <begin position="300"/>
        <end position="321"/>
    </location>
</feature>
<feature type="domain" description="EamA 1">
    <location>
        <begin position="17"/>
        <end position="144"/>
    </location>
</feature>
<feature type="domain" description="EamA 2">
    <location>
        <begin position="169"/>
        <end position="292"/>
    </location>
</feature>
<organism>
    <name type="scientific">Escherichia coli O157:H7</name>
    <dbReference type="NCBI Taxonomy" id="83334"/>
    <lineage>
        <taxon>Bacteria</taxon>
        <taxon>Pseudomonadati</taxon>
        <taxon>Pseudomonadota</taxon>
        <taxon>Gammaproteobacteria</taxon>
        <taxon>Enterobacterales</taxon>
        <taxon>Enterobacteriaceae</taxon>
        <taxon>Escherichia</taxon>
    </lineage>
</organism>
<sequence length="321" mass="34963">MKQQAGIGILLALTTAICWGALPIAMKQVLEVMEPPTIVFYRFLMASIGLGAILAVKKRLPPLRVFRKPRWLILLAVATAGLFGNFILFSSSLQYLSPTASQVIGQLSPVGMMVASVFILKEKMRSTQVVGALMLLSGLVMFFNTSLVEIFTKLTDYTWGVIFGVGAATVWVSYGVAQKVLLRRLASPQILFLLYTLCTIALFPLAKPGVIAQLSHWQLACLIFCGLNTLVGYGALAEAMARWQAAQVSAIITLTPLFTLFFSDLLSLAWPDFFARPMLNLLGYLGAFVVVAGAMYSAIGHRIWGGLRKHTTVVSQPRAGE</sequence>
<evidence type="ECO:0000250" key="1"/>
<evidence type="ECO:0000255" key="2"/>
<evidence type="ECO:0000305" key="3"/>
<keyword id="KW-0997">Cell inner membrane</keyword>
<keyword id="KW-1003">Cell membrane</keyword>
<keyword id="KW-0472">Membrane</keyword>
<keyword id="KW-1185">Reference proteome</keyword>
<keyword id="KW-0677">Repeat</keyword>
<keyword id="KW-0812">Transmembrane</keyword>
<keyword id="KW-1133">Transmembrane helix</keyword>
<keyword id="KW-0813">Transport</keyword>
<proteinExistence type="inferred from homology"/>
<name>YHBE_ECO57</name>
<reference key="1">
    <citation type="journal article" date="2001" name="Nature">
        <title>Genome sequence of enterohaemorrhagic Escherichia coli O157:H7.</title>
        <authorList>
            <person name="Perna N.T."/>
            <person name="Plunkett G. III"/>
            <person name="Burland V."/>
            <person name="Mau B."/>
            <person name="Glasner J.D."/>
            <person name="Rose D.J."/>
            <person name="Mayhew G.F."/>
            <person name="Evans P.S."/>
            <person name="Gregor J."/>
            <person name="Kirkpatrick H.A."/>
            <person name="Posfai G."/>
            <person name="Hackett J."/>
            <person name="Klink S."/>
            <person name="Boutin A."/>
            <person name="Shao Y."/>
            <person name="Miller L."/>
            <person name="Grotbeck E.J."/>
            <person name="Davis N.W."/>
            <person name="Lim A."/>
            <person name="Dimalanta E.T."/>
            <person name="Potamousis K."/>
            <person name="Apodaca J."/>
            <person name="Anantharaman T.S."/>
            <person name="Lin J."/>
            <person name="Yen G."/>
            <person name="Schwartz D.C."/>
            <person name="Welch R.A."/>
            <person name="Blattner F.R."/>
        </authorList>
    </citation>
    <scope>NUCLEOTIDE SEQUENCE [LARGE SCALE GENOMIC DNA]</scope>
    <source>
        <strain>O157:H7 / EDL933 / ATCC 700927 / EHEC</strain>
    </source>
</reference>
<reference key="2">
    <citation type="journal article" date="2001" name="DNA Res.">
        <title>Complete genome sequence of enterohemorrhagic Escherichia coli O157:H7 and genomic comparison with a laboratory strain K-12.</title>
        <authorList>
            <person name="Hayashi T."/>
            <person name="Makino K."/>
            <person name="Ohnishi M."/>
            <person name="Kurokawa K."/>
            <person name="Ishii K."/>
            <person name="Yokoyama K."/>
            <person name="Han C.-G."/>
            <person name="Ohtsubo E."/>
            <person name="Nakayama K."/>
            <person name="Murata T."/>
            <person name="Tanaka M."/>
            <person name="Tobe T."/>
            <person name="Iida T."/>
            <person name="Takami H."/>
            <person name="Honda T."/>
            <person name="Sasakawa C."/>
            <person name="Ogasawara N."/>
            <person name="Yasunaga T."/>
            <person name="Kuhara S."/>
            <person name="Shiba T."/>
            <person name="Hattori M."/>
            <person name="Shinagawa H."/>
        </authorList>
    </citation>
    <scope>NUCLEOTIDE SEQUENCE [LARGE SCALE GENOMIC DNA]</scope>
    <source>
        <strain>O157:H7 / Sakai / RIMD 0509952 / EHEC</strain>
    </source>
</reference>
<dbReference type="EMBL" id="AE005174">
    <property type="protein sequence ID" value="AAG58318.1"/>
    <property type="molecule type" value="Genomic_DNA"/>
</dbReference>
<dbReference type="EMBL" id="BA000007">
    <property type="protein sequence ID" value="BAB37486.1"/>
    <property type="molecule type" value="Genomic_DNA"/>
</dbReference>
<dbReference type="PIR" id="B85982">
    <property type="entry name" value="B85982"/>
</dbReference>
<dbReference type="PIR" id="G91136">
    <property type="entry name" value="G91136"/>
</dbReference>
<dbReference type="RefSeq" id="NP_312090.1">
    <property type="nucleotide sequence ID" value="NC_002695.1"/>
</dbReference>
<dbReference type="RefSeq" id="WP_000813037.1">
    <property type="nucleotide sequence ID" value="NZ_VOAI01000014.1"/>
</dbReference>
<dbReference type="SMR" id="P0AA74"/>
<dbReference type="STRING" id="155864.Z4546"/>
<dbReference type="GeneID" id="916095"/>
<dbReference type="KEGG" id="ece:Z4546"/>
<dbReference type="KEGG" id="ecs:ECs_4063"/>
<dbReference type="PATRIC" id="fig|386585.9.peg.4242"/>
<dbReference type="eggNOG" id="COG0697">
    <property type="taxonomic scope" value="Bacteria"/>
</dbReference>
<dbReference type="HOGENOM" id="CLU_074108_1_0_6"/>
<dbReference type="OMA" id="HRLWGRW"/>
<dbReference type="Proteomes" id="UP000000558">
    <property type="component" value="Chromosome"/>
</dbReference>
<dbReference type="Proteomes" id="UP000002519">
    <property type="component" value="Chromosome"/>
</dbReference>
<dbReference type="GO" id="GO:0005886">
    <property type="term" value="C:plasma membrane"/>
    <property type="evidence" value="ECO:0007669"/>
    <property type="project" value="UniProtKB-SubCell"/>
</dbReference>
<dbReference type="Gene3D" id="1.10.3730.20">
    <property type="match status" value="1"/>
</dbReference>
<dbReference type="InterPro" id="IPR000620">
    <property type="entry name" value="EamA_dom"/>
</dbReference>
<dbReference type="PANTHER" id="PTHR22911">
    <property type="entry name" value="ACYL-MALONYL CONDENSING ENZYME-RELATED"/>
    <property type="match status" value="1"/>
</dbReference>
<dbReference type="PANTHER" id="PTHR22911:SF134">
    <property type="entry name" value="DMT FAMILY TRANSPORTER"/>
    <property type="match status" value="1"/>
</dbReference>
<dbReference type="Pfam" id="PF00892">
    <property type="entry name" value="EamA"/>
    <property type="match status" value="2"/>
</dbReference>
<dbReference type="SUPFAM" id="SSF103481">
    <property type="entry name" value="Multidrug resistance efflux transporter EmrE"/>
    <property type="match status" value="1"/>
</dbReference>
<protein>
    <recommendedName>
        <fullName>Uncharacterized inner membrane transporter YhbE</fullName>
    </recommendedName>
</protein>
<gene>
    <name type="primary">yhbE</name>
    <name type="ordered locus">Z4546</name>
    <name type="ordered locus">ECs4063</name>
</gene>